<comment type="function">
    <text evidence="1">Catalyzes the reductive methylation of 2'-deoxyuridine-5'-monophosphate (dUMP) to 2'-deoxythymidine-5'-monophosphate (dTMP) while utilizing 5,10-methylenetetrahydrofolate (mTHF) as the methyl donor and reductant in the reaction, yielding dihydrofolate (DHF) as a by-product. This enzymatic reaction provides an intracellular de novo source of dTMP, an essential precursor for DNA biosynthesis.</text>
</comment>
<comment type="catalytic activity">
    <reaction evidence="1">
        <text>dUMP + (6R)-5,10-methylene-5,6,7,8-tetrahydrofolate = 7,8-dihydrofolate + dTMP</text>
        <dbReference type="Rhea" id="RHEA:12104"/>
        <dbReference type="ChEBI" id="CHEBI:15636"/>
        <dbReference type="ChEBI" id="CHEBI:57451"/>
        <dbReference type="ChEBI" id="CHEBI:63528"/>
        <dbReference type="ChEBI" id="CHEBI:246422"/>
        <dbReference type="EC" id="2.1.1.45"/>
    </reaction>
</comment>
<comment type="pathway">
    <text evidence="1">Pyrimidine metabolism; dTTP biosynthesis.</text>
</comment>
<comment type="subunit">
    <text evidence="1">Homodimer.</text>
</comment>
<comment type="subcellular location">
    <subcellularLocation>
        <location evidence="1">Cytoplasm</location>
    </subcellularLocation>
</comment>
<comment type="similarity">
    <text evidence="1">Belongs to the thymidylate synthase family. Bacterial-type ThyA subfamily.</text>
</comment>
<comment type="sequence caution" evidence="2">
    <conflict type="erroneous initiation">
        <sequence resource="EMBL-CDS" id="CAA90532"/>
    </conflict>
</comment>
<dbReference type="EC" id="2.1.1.45" evidence="1"/>
<dbReference type="EMBL" id="Z50164">
    <property type="protein sequence ID" value="CAA90532.1"/>
    <property type="status" value="ALT_INIT"/>
    <property type="molecule type" value="Genomic_DNA"/>
</dbReference>
<dbReference type="SMR" id="P54081"/>
<dbReference type="STRING" id="692420.BAMF_2083"/>
<dbReference type="eggNOG" id="COG0207">
    <property type="taxonomic scope" value="Bacteria"/>
</dbReference>
<dbReference type="UniPathway" id="UPA00575"/>
<dbReference type="GO" id="GO:0005829">
    <property type="term" value="C:cytosol"/>
    <property type="evidence" value="ECO:0007669"/>
    <property type="project" value="TreeGrafter"/>
</dbReference>
<dbReference type="GO" id="GO:0004799">
    <property type="term" value="F:thymidylate synthase activity"/>
    <property type="evidence" value="ECO:0007669"/>
    <property type="project" value="UniProtKB-UniRule"/>
</dbReference>
<dbReference type="GO" id="GO:0006231">
    <property type="term" value="P:dTMP biosynthetic process"/>
    <property type="evidence" value="ECO:0007669"/>
    <property type="project" value="UniProtKB-UniRule"/>
</dbReference>
<dbReference type="GO" id="GO:0006235">
    <property type="term" value="P:dTTP biosynthetic process"/>
    <property type="evidence" value="ECO:0007669"/>
    <property type="project" value="UniProtKB-UniRule"/>
</dbReference>
<dbReference type="GO" id="GO:0032259">
    <property type="term" value="P:methylation"/>
    <property type="evidence" value="ECO:0007669"/>
    <property type="project" value="UniProtKB-KW"/>
</dbReference>
<dbReference type="CDD" id="cd00351">
    <property type="entry name" value="TS_Pyrimidine_HMase"/>
    <property type="match status" value="1"/>
</dbReference>
<dbReference type="FunFam" id="3.30.572.10:FF:000001">
    <property type="entry name" value="Thymidylate synthase"/>
    <property type="match status" value="1"/>
</dbReference>
<dbReference type="Gene3D" id="3.30.572.10">
    <property type="entry name" value="Thymidylate synthase/dCMP hydroxymethylase domain"/>
    <property type="match status" value="1"/>
</dbReference>
<dbReference type="HAMAP" id="MF_00008">
    <property type="entry name" value="Thymidy_synth_bact"/>
    <property type="match status" value="1"/>
</dbReference>
<dbReference type="InterPro" id="IPR045097">
    <property type="entry name" value="Thymidate_synth/dCMP_Mease"/>
</dbReference>
<dbReference type="InterPro" id="IPR023451">
    <property type="entry name" value="Thymidate_synth/dCMP_Mease_dom"/>
</dbReference>
<dbReference type="InterPro" id="IPR036926">
    <property type="entry name" value="Thymidate_synth/dCMP_Mease_sf"/>
</dbReference>
<dbReference type="InterPro" id="IPR000398">
    <property type="entry name" value="Thymidylate_synthase"/>
</dbReference>
<dbReference type="InterPro" id="IPR020940">
    <property type="entry name" value="Thymidylate_synthase_AS"/>
</dbReference>
<dbReference type="NCBIfam" id="NF002497">
    <property type="entry name" value="PRK01827.1-3"/>
    <property type="match status" value="1"/>
</dbReference>
<dbReference type="NCBIfam" id="NF002499">
    <property type="entry name" value="PRK01827.1-5"/>
    <property type="match status" value="1"/>
</dbReference>
<dbReference type="NCBIfam" id="TIGR03284">
    <property type="entry name" value="thym_sym"/>
    <property type="match status" value="2"/>
</dbReference>
<dbReference type="PANTHER" id="PTHR11548:SF9">
    <property type="entry name" value="THYMIDYLATE SYNTHASE"/>
    <property type="match status" value="1"/>
</dbReference>
<dbReference type="PANTHER" id="PTHR11548">
    <property type="entry name" value="THYMIDYLATE SYNTHASE 1"/>
    <property type="match status" value="1"/>
</dbReference>
<dbReference type="Pfam" id="PF00303">
    <property type="entry name" value="Thymidylat_synt"/>
    <property type="match status" value="1"/>
</dbReference>
<dbReference type="PRINTS" id="PR00108">
    <property type="entry name" value="THYMDSNTHASE"/>
</dbReference>
<dbReference type="SUPFAM" id="SSF55831">
    <property type="entry name" value="Thymidylate synthase/dCMP hydroxymethylase"/>
    <property type="match status" value="1"/>
</dbReference>
<dbReference type="PROSITE" id="PS00091">
    <property type="entry name" value="THYMIDYLATE_SYNTHASE"/>
    <property type="match status" value="1"/>
</dbReference>
<proteinExistence type="inferred from homology"/>
<reference key="1">
    <citation type="submission" date="1995-07" db="EMBL/GenBank/DDBJ databases">
        <title>Cloning of the Bacillus thymidylate synthase genes thyBA and thyBL.</title>
        <authorList>
            <person name="Steinborn G."/>
            <person name="Richter K."/>
        </authorList>
    </citation>
    <scope>NUCLEOTIDE SEQUENCE [GENOMIC DNA]</scope>
    <source>
        <strain>ATCC 23844 / P</strain>
    </source>
</reference>
<name>TYSY2_BACAM</name>
<gene>
    <name evidence="1" type="primary">thyA2</name>
    <name type="synonym">thyB</name>
    <name type="synonym">thyBA</name>
</gene>
<accession>P54081</accession>
<protein>
    <recommendedName>
        <fullName evidence="1">Thymidylate synthase 2</fullName>
        <shortName evidence="1">TS 2</shortName>
        <shortName evidence="1">TSase 2</shortName>
        <ecNumber evidence="1">2.1.1.45</ecNumber>
    </recommendedName>
    <alternativeName>
        <fullName>Thymidylate synthase B</fullName>
        <shortName>TS B</shortName>
        <shortName>TSase B</shortName>
    </alternativeName>
</protein>
<keyword id="KW-0963">Cytoplasm</keyword>
<keyword id="KW-0489">Methyltransferase</keyword>
<keyword id="KW-0545">Nucleotide biosynthesis</keyword>
<keyword id="KW-0808">Transferase</keyword>
<organism>
    <name type="scientific">Bacillus amyloliquefaciens</name>
    <name type="common">Bacillus velezensis</name>
    <dbReference type="NCBI Taxonomy" id="1390"/>
    <lineage>
        <taxon>Bacteria</taxon>
        <taxon>Bacillati</taxon>
        <taxon>Bacillota</taxon>
        <taxon>Bacilli</taxon>
        <taxon>Bacillales</taxon>
        <taxon>Bacillaceae</taxon>
        <taxon>Bacillus</taxon>
        <taxon>Bacillus amyloliquefaciens group</taxon>
    </lineage>
</organism>
<sequence length="264" mass="30350">MKQYKDLCRHVLENGEKKGDRTGTGTISTFGYQMRFNLQGGFPMLTTKKLHFKSIAHELLWFLKGDTNVRYLQENGVRIWNEWADENGELGPVYGSQWRSWRGADGETIDQISRLIHDIKTNPNSRRLIVSAWNVGEIDRMALPPCHCLFQFYVADGKLSCQLYQRSADVFLGVPFNIASYALLTMMIAHVTGLEPGEFVHTFGDVHIYQNHVEQVNLQLTRDVRPLPKLRFARNVDSIFDFAFEDFIIEDYDPHPHIKGAVSV</sequence>
<feature type="chain" id="PRO_0000140918" description="Thymidylate synthase 2">
    <location>
        <begin position="1"/>
        <end position="264"/>
    </location>
</feature>
<feature type="active site" description="Nucleophile" evidence="1">
    <location>
        <position position="146"/>
    </location>
</feature>
<feature type="binding site" description="in other chain" evidence="1">
    <location>
        <position position="21"/>
    </location>
    <ligand>
        <name>dUMP</name>
        <dbReference type="ChEBI" id="CHEBI:246422"/>
        <note>ligand shared between dimeric partners</note>
    </ligand>
</feature>
<feature type="binding site" evidence="1">
    <location>
        <position position="51"/>
    </location>
    <ligand>
        <name>(6R)-5,10-methylene-5,6,7,8-tetrahydrofolate</name>
        <dbReference type="ChEBI" id="CHEBI:15636"/>
    </ligand>
</feature>
<feature type="binding site" evidence="1">
    <location>
        <begin position="126"/>
        <end position="127"/>
    </location>
    <ligand>
        <name>dUMP</name>
        <dbReference type="ChEBI" id="CHEBI:246422"/>
        <note>ligand shared between dimeric partners</note>
    </ligand>
</feature>
<feature type="binding site" description="in other chain" evidence="1">
    <location>
        <begin position="166"/>
        <end position="169"/>
    </location>
    <ligand>
        <name>dUMP</name>
        <dbReference type="ChEBI" id="CHEBI:246422"/>
        <note>ligand shared between dimeric partners</note>
    </ligand>
</feature>
<feature type="binding site" evidence="1">
    <location>
        <position position="169"/>
    </location>
    <ligand>
        <name>(6R)-5,10-methylene-5,6,7,8-tetrahydrofolate</name>
        <dbReference type="ChEBI" id="CHEBI:15636"/>
    </ligand>
</feature>
<feature type="binding site" description="in other chain" evidence="1">
    <location>
        <position position="177"/>
    </location>
    <ligand>
        <name>dUMP</name>
        <dbReference type="ChEBI" id="CHEBI:246422"/>
        <note>ligand shared between dimeric partners</note>
    </ligand>
</feature>
<feature type="binding site" description="in other chain" evidence="1">
    <location>
        <begin position="207"/>
        <end position="209"/>
    </location>
    <ligand>
        <name>dUMP</name>
        <dbReference type="ChEBI" id="CHEBI:246422"/>
        <note>ligand shared between dimeric partners</note>
    </ligand>
</feature>
<feature type="binding site" evidence="1">
    <location>
        <position position="263"/>
    </location>
    <ligand>
        <name>(6R)-5,10-methylene-5,6,7,8-tetrahydrofolate</name>
        <dbReference type="ChEBI" id="CHEBI:15636"/>
    </ligand>
</feature>
<evidence type="ECO:0000255" key="1">
    <source>
        <dbReference type="HAMAP-Rule" id="MF_00008"/>
    </source>
</evidence>
<evidence type="ECO:0000305" key="2"/>